<protein>
    <recommendedName>
        <fullName>Thioredoxin reductase</fullName>
        <shortName>TRXR</shortName>
        <ecNumber>1.8.1.9</ecNumber>
    </recommendedName>
</protein>
<feature type="chain" id="PRO_0000166736" description="Thioredoxin reductase">
    <location>
        <begin position="1"/>
        <end position="319"/>
    </location>
</feature>
<feature type="binding site" evidence="2">
    <location>
        <begin position="37"/>
        <end position="44"/>
    </location>
    <ligand>
        <name>FAD</name>
        <dbReference type="ChEBI" id="CHEBI:57692"/>
    </ligand>
</feature>
<feature type="binding site" evidence="2">
    <location>
        <begin position="279"/>
        <end position="288"/>
    </location>
    <ligand>
        <name>FAD</name>
        <dbReference type="ChEBI" id="CHEBI:57692"/>
    </ligand>
</feature>
<feature type="disulfide bond" description="Redox-active" evidence="2">
    <location>
        <begin position="136"/>
        <end position="139"/>
    </location>
</feature>
<reference key="1">
    <citation type="submission" date="1997-06" db="EMBL/GenBank/DDBJ databases">
        <title>Isolation, cloning and characterization of the Listeria monocytogenes thioredoxin reductase gene, trxB.</title>
        <authorList>
            <person name="Borovok I."/>
            <person name="Mislovati M."/>
            <person name="Cohen G."/>
            <person name="Aharonowitz Y."/>
        </authorList>
    </citation>
    <scope>NUCLEOTIDE SEQUENCE [GENOMIC DNA]</scope>
    <source>
        <strain>EGD / Serovar 1/2a</strain>
    </source>
</reference>
<reference key="2">
    <citation type="journal article" date="2001" name="Science">
        <title>Comparative genomics of Listeria species.</title>
        <authorList>
            <person name="Glaser P."/>
            <person name="Frangeul L."/>
            <person name="Buchrieser C."/>
            <person name="Rusniok C."/>
            <person name="Amend A."/>
            <person name="Baquero F."/>
            <person name="Berche P."/>
            <person name="Bloecker H."/>
            <person name="Brandt P."/>
            <person name="Chakraborty T."/>
            <person name="Charbit A."/>
            <person name="Chetouani F."/>
            <person name="Couve E."/>
            <person name="de Daruvar A."/>
            <person name="Dehoux P."/>
            <person name="Domann E."/>
            <person name="Dominguez-Bernal G."/>
            <person name="Duchaud E."/>
            <person name="Durant L."/>
            <person name="Dussurget O."/>
            <person name="Entian K.-D."/>
            <person name="Fsihi H."/>
            <person name="Garcia-del Portillo F."/>
            <person name="Garrido P."/>
            <person name="Gautier L."/>
            <person name="Goebel W."/>
            <person name="Gomez-Lopez N."/>
            <person name="Hain T."/>
            <person name="Hauf J."/>
            <person name="Jackson D."/>
            <person name="Jones L.-M."/>
            <person name="Kaerst U."/>
            <person name="Kreft J."/>
            <person name="Kuhn M."/>
            <person name="Kunst F."/>
            <person name="Kurapkat G."/>
            <person name="Madueno E."/>
            <person name="Maitournam A."/>
            <person name="Mata Vicente J."/>
            <person name="Ng E."/>
            <person name="Nedjari H."/>
            <person name="Nordsiek G."/>
            <person name="Novella S."/>
            <person name="de Pablos B."/>
            <person name="Perez-Diaz J.-C."/>
            <person name="Purcell R."/>
            <person name="Remmel B."/>
            <person name="Rose M."/>
            <person name="Schlueter T."/>
            <person name="Simoes N."/>
            <person name="Tierrez A."/>
            <person name="Vazquez-Boland J.-A."/>
            <person name="Voss H."/>
            <person name="Wehland J."/>
            <person name="Cossart P."/>
        </authorList>
    </citation>
    <scope>NUCLEOTIDE SEQUENCE [LARGE SCALE GENOMIC DNA]</scope>
    <source>
        <strain>ATCC BAA-679 / EGD-e</strain>
    </source>
</reference>
<evidence type="ECO:0000250" key="1"/>
<evidence type="ECO:0000250" key="2">
    <source>
        <dbReference type="UniProtKB" id="P0A9P4"/>
    </source>
</evidence>
<evidence type="ECO:0000305" key="3"/>
<dbReference type="EC" id="1.8.1.9"/>
<dbReference type="EMBL" id="AF009622">
    <property type="protein sequence ID" value="AAB63804.1"/>
    <property type="molecule type" value="Genomic_DNA"/>
</dbReference>
<dbReference type="EMBL" id="AL591983">
    <property type="protein sequence ID" value="CAD00556.1"/>
    <property type="molecule type" value="Genomic_DNA"/>
</dbReference>
<dbReference type="PIR" id="AF1384">
    <property type="entry name" value="AF1384"/>
</dbReference>
<dbReference type="RefSeq" id="NP_466001.1">
    <property type="nucleotide sequence ID" value="NC_003210.1"/>
</dbReference>
<dbReference type="RefSeq" id="WP_003722610.1">
    <property type="nucleotide sequence ID" value="NZ_CP149495.1"/>
</dbReference>
<dbReference type="SMR" id="O32823"/>
<dbReference type="STRING" id="169963.gene:17595189"/>
<dbReference type="PaxDb" id="169963-lmo2478"/>
<dbReference type="EnsemblBacteria" id="CAD00556">
    <property type="protein sequence ID" value="CAD00556"/>
    <property type="gene ID" value="CAD00556"/>
</dbReference>
<dbReference type="GeneID" id="987338"/>
<dbReference type="KEGG" id="lmo:lmo2478"/>
<dbReference type="PATRIC" id="fig|169963.11.peg.2538"/>
<dbReference type="eggNOG" id="COG0492">
    <property type="taxonomic scope" value="Bacteria"/>
</dbReference>
<dbReference type="HOGENOM" id="CLU_031864_5_1_9"/>
<dbReference type="OrthoDB" id="9806179at2"/>
<dbReference type="PhylomeDB" id="O32823"/>
<dbReference type="BioCyc" id="LMON169963:LMO2478-MONOMER"/>
<dbReference type="Proteomes" id="UP000000817">
    <property type="component" value="Chromosome"/>
</dbReference>
<dbReference type="GO" id="GO:0005737">
    <property type="term" value="C:cytoplasm"/>
    <property type="evidence" value="ECO:0007669"/>
    <property type="project" value="UniProtKB-SubCell"/>
</dbReference>
<dbReference type="GO" id="GO:0004791">
    <property type="term" value="F:thioredoxin-disulfide reductase (NADPH) activity"/>
    <property type="evidence" value="ECO:0000318"/>
    <property type="project" value="GO_Central"/>
</dbReference>
<dbReference type="GO" id="GO:0045454">
    <property type="term" value="P:cell redox homeostasis"/>
    <property type="evidence" value="ECO:0000318"/>
    <property type="project" value="GO_Central"/>
</dbReference>
<dbReference type="GO" id="GO:0019430">
    <property type="term" value="P:removal of superoxide radicals"/>
    <property type="evidence" value="ECO:0007669"/>
    <property type="project" value="InterPro"/>
</dbReference>
<dbReference type="Gene3D" id="3.50.50.60">
    <property type="entry name" value="FAD/NAD(P)-binding domain"/>
    <property type="match status" value="2"/>
</dbReference>
<dbReference type="InterPro" id="IPR036188">
    <property type="entry name" value="FAD/NAD-bd_sf"/>
</dbReference>
<dbReference type="InterPro" id="IPR023753">
    <property type="entry name" value="FAD/NAD-binding_dom"/>
</dbReference>
<dbReference type="InterPro" id="IPR050097">
    <property type="entry name" value="Ferredoxin-NADP_redctase_2"/>
</dbReference>
<dbReference type="InterPro" id="IPR008255">
    <property type="entry name" value="Pyr_nucl-diS_OxRdtase_2_AS"/>
</dbReference>
<dbReference type="InterPro" id="IPR005982">
    <property type="entry name" value="Thioredox_Rdtase"/>
</dbReference>
<dbReference type="NCBIfam" id="TIGR01292">
    <property type="entry name" value="TRX_reduct"/>
    <property type="match status" value="1"/>
</dbReference>
<dbReference type="PANTHER" id="PTHR48105">
    <property type="entry name" value="THIOREDOXIN REDUCTASE 1-RELATED-RELATED"/>
    <property type="match status" value="1"/>
</dbReference>
<dbReference type="Pfam" id="PF07992">
    <property type="entry name" value="Pyr_redox_2"/>
    <property type="match status" value="1"/>
</dbReference>
<dbReference type="PRINTS" id="PR00368">
    <property type="entry name" value="FADPNR"/>
</dbReference>
<dbReference type="PRINTS" id="PR00469">
    <property type="entry name" value="PNDRDTASEII"/>
</dbReference>
<dbReference type="SUPFAM" id="SSF51905">
    <property type="entry name" value="FAD/NAD(P)-binding domain"/>
    <property type="match status" value="1"/>
</dbReference>
<dbReference type="PROSITE" id="PS00573">
    <property type="entry name" value="PYRIDINE_REDOX_2"/>
    <property type="match status" value="1"/>
</dbReference>
<accession>O32823</accession>
<gene>
    <name type="primary">trxB</name>
    <name type="ordered locus">lmo2478</name>
</gene>
<proteinExistence type="inferred from homology"/>
<comment type="catalytic activity">
    <reaction>
        <text>[thioredoxin]-dithiol + NADP(+) = [thioredoxin]-disulfide + NADPH + H(+)</text>
        <dbReference type="Rhea" id="RHEA:20345"/>
        <dbReference type="Rhea" id="RHEA-COMP:10698"/>
        <dbReference type="Rhea" id="RHEA-COMP:10700"/>
        <dbReference type="ChEBI" id="CHEBI:15378"/>
        <dbReference type="ChEBI" id="CHEBI:29950"/>
        <dbReference type="ChEBI" id="CHEBI:50058"/>
        <dbReference type="ChEBI" id="CHEBI:57783"/>
        <dbReference type="ChEBI" id="CHEBI:58349"/>
        <dbReference type="EC" id="1.8.1.9"/>
    </reaction>
</comment>
<comment type="cofactor">
    <cofactor evidence="2">
        <name>FAD</name>
        <dbReference type="ChEBI" id="CHEBI:57692"/>
    </cofactor>
    <text evidence="2">Binds 1 FAD per subunit.</text>
</comment>
<comment type="subunit">
    <text evidence="2">Homodimer.</text>
</comment>
<comment type="subcellular location">
    <subcellularLocation>
        <location evidence="1">Cytoplasm</location>
    </subcellularLocation>
</comment>
<comment type="miscellaneous">
    <text>The active site is a redox-active disulfide bond.</text>
</comment>
<comment type="similarity">
    <text evidence="3">Belongs to the class-II pyridine nucleotide-disulfide oxidoreductase family.</text>
</comment>
<organism>
    <name type="scientific">Listeria monocytogenes serovar 1/2a (strain ATCC BAA-679 / EGD-e)</name>
    <dbReference type="NCBI Taxonomy" id="169963"/>
    <lineage>
        <taxon>Bacteria</taxon>
        <taxon>Bacillati</taxon>
        <taxon>Bacillota</taxon>
        <taxon>Bacilli</taxon>
        <taxon>Bacillales</taxon>
        <taxon>Listeriaceae</taxon>
        <taxon>Listeria</taxon>
    </lineage>
</organism>
<sequence length="319" mass="34174">MASEEKIYDVIIIGAGPAGMTAALYTSRADLDTLMIERGVPGGQMVNTAEVENYPGFDSILGPDLSDKMLSGAKQFGAEYAYGDIKEVVDGKEFKTVTAGSKTYKARAIIIATGAEHRKLGAAGEEELSGRGVSYCAVCDGAFFKNRELIVVGGGDSAVEEGTYLTRYADKVTIVHRRDKLRAQQILQDRAFKDEKVDFIWNSTVEEIVGDGKKVTGAKLVSTVDGSESIMPVDGVFIYVGLVPLTKAFLNLGITDDEGYIVTDEEMRTNLPGIFAAGDVRAKSLRQIVTATGDGGLAGQNAQKYVEELKESLEAEAAK</sequence>
<name>TRXB_LISMO</name>
<keyword id="KW-0963">Cytoplasm</keyword>
<keyword id="KW-1015">Disulfide bond</keyword>
<keyword id="KW-0274">FAD</keyword>
<keyword id="KW-0285">Flavoprotein</keyword>
<keyword id="KW-0521">NADP</keyword>
<keyword id="KW-0560">Oxidoreductase</keyword>
<keyword id="KW-0676">Redox-active center</keyword>
<keyword id="KW-1185">Reference proteome</keyword>